<gene>
    <name evidence="1" type="primary">hisF</name>
    <name type="ordered locus">BBta_0142</name>
</gene>
<protein>
    <recommendedName>
        <fullName evidence="1">Imidazole glycerol phosphate synthase subunit HisF</fullName>
        <ecNumber evidence="1">4.3.2.10</ecNumber>
    </recommendedName>
    <alternativeName>
        <fullName evidence="1">IGP synthase cyclase subunit</fullName>
    </alternativeName>
    <alternativeName>
        <fullName evidence="1">IGP synthase subunit HisF</fullName>
    </alternativeName>
    <alternativeName>
        <fullName evidence="1">ImGP synthase subunit HisF</fullName>
        <shortName evidence="1">IGPS subunit HisF</shortName>
    </alternativeName>
</protein>
<proteinExistence type="inferred from homology"/>
<dbReference type="EC" id="4.3.2.10" evidence="1"/>
<dbReference type="EMBL" id="CP000494">
    <property type="protein sequence ID" value="ABQ32439.1"/>
    <property type="molecule type" value="Genomic_DNA"/>
</dbReference>
<dbReference type="RefSeq" id="WP_011942661.1">
    <property type="nucleotide sequence ID" value="NC_009485.1"/>
</dbReference>
<dbReference type="SMR" id="A5E8E5"/>
<dbReference type="STRING" id="288000.BBta_0142"/>
<dbReference type="KEGG" id="bbt:BBta_0142"/>
<dbReference type="eggNOG" id="COG0107">
    <property type="taxonomic scope" value="Bacteria"/>
</dbReference>
<dbReference type="HOGENOM" id="CLU_048577_4_0_5"/>
<dbReference type="OrthoDB" id="9781903at2"/>
<dbReference type="UniPathway" id="UPA00031">
    <property type="reaction ID" value="UER00010"/>
</dbReference>
<dbReference type="Proteomes" id="UP000000246">
    <property type="component" value="Chromosome"/>
</dbReference>
<dbReference type="GO" id="GO:0005737">
    <property type="term" value="C:cytoplasm"/>
    <property type="evidence" value="ECO:0007669"/>
    <property type="project" value="UniProtKB-SubCell"/>
</dbReference>
<dbReference type="GO" id="GO:0000107">
    <property type="term" value="F:imidazoleglycerol-phosphate synthase activity"/>
    <property type="evidence" value="ECO:0007669"/>
    <property type="project" value="UniProtKB-UniRule"/>
</dbReference>
<dbReference type="GO" id="GO:0016829">
    <property type="term" value="F:lyase activity"/>
    <property type="evidence" value="ECO:0007669"/>
    <property type="project" value="UniProtKB-KW"/>
</dbReference>
<dbReference type="GO" id="GO:0000105">
    <property type="term" value="P:L-histidine biosynthetic process"/>
    <property type="evidence" value="ECO:0007669"/>
    <property type="project" value="UniProtKB-UniRule"/>
</dbReference>
<dbReference type="CDD" id="cd04731">
    <property type="entry name" value="HisF"/>
    <property type="match status" value="1"/>
</dbReference>
<dbReference type="FunFam" id="3.20.20.70:FF:000006">
    <property type="entry name" value="Imidazole glycerol phosphate synthase subunit HisF"/>
    <property type="match status" value="1"/>
</dbReference>
<dbReference type="Gene3D" id="3.20.20.70">
    <property type="entry name" value="Aldolase class I"/>
    <property type="match status" value="1"/>
</dbReference>
<dbReference type="HAMAP" id="MF_01013">
    <property type="entry name" value="HisF"/>
    <property type="match status" value="1"/>
</dbReference>
<dbReference type="InterPro" id="IPR013785">
    <property type="entry name" value="Aldolase_TIM"/>
</dbReference>
<dbReference type="InterPro" id="IPR006062">
    <property type="entry name" value="His_biosynth"/>
</dbReference>
<dbReference type="InterPro" id="IPR004651">
    <property type="entry name" value="HisF"/>
</dbReference>
<dbReference type="InterPro" id="IPR050064">
    <property type="entry name" value="IGPS_HisA/HisF"/>
</dbReference>
<dbReference type="InterPro" id="IPR011060">
    <property type="entry name" value="RibuloseP-bd_barrel"/>
</dbReference>
<dbReference type="NCBIfam" id="TIGR00735">
    <property type="entry name" value="hisF"/>
    <property type="match status" value="1"/>
</dbReference>
<dbReference type="PANTHER" id="PTHR21235:SF2">
    <property type="entry name" value="IMIDAZOLE GLYCEROL PHOSPHATE SYNTHASE HISHF"/>
    <property type="match status" value="1"/>
</dbReference>
<dbReference type="PANTHER" id="PTHR21235">
    <property type="entry name" value="IMIDAZOLE GLYCEROL PHOSPHATE SYNTHASE SUBUNIT HISF/H IGP SYNTHASE SUBUNIT HISF/H"/>
    <property type="match status" value="1"/>
</dbReference>
<dbReference type="Pfam" id="PF00977">
    <property type="entry name" value="His_biosynth"/>
    <property type="match status" value="1"/>
</dbReference>
<dbReference type="SUPFAM" id="SSF51366">
    <property type="entry name" value="Ribulose-phoshate binding barrel"/>
    <property type="match status" value="1"/>
</dbReference>
<reference key="1">
    <citation type="journal article" date="2007" name="Science">
        <title>Legumes symbioses: absence of nod genes in photosynthetic bradyrhizobia.</title>
        <authorList>
            <person name="Giraud E."/>
            <person name="Moulin L."/>
            <person name="Vallenet D."/>
            <person name="Barbe V."/>
            <person name="Cytryn E."/>
            <person name="Avarre J.-C."/>
            <person name="Jaubert M."/>
            <person name="Simon D."/>
            <person name="Cartieaux F."/>
            <person name="Prin Y."/>
            <person name="Bena G."/>
            <person name="Hannibal L."/>
            <person name="Fardoux J."/>
            <person name="Kojadinovic M."/>
            <person name="Vuillet L."/>
            <person name="Lajus A."/>
            <person name="Cruveiller S."/>
            <person name="Rouy Z."/>
            <person name="Mangenot S."/>
            <person name="Segurens B."/>
            <person name="Dossat C."/>
            <person name="Franck W.L."/>
            <person name="Chang W.-S."/>
            <person name="Saunders E."/>
            <person name="Bruce D."/>
            <person name="Richardson P."/>
            <person name="Normand P."/>
            <person name="Dreyfus B."/>
            <person name="Pignol D."/>
            <person name="Stacey G."/>
            <person name="Emerich D."/>
            <person name="Vermeglio A."/>
            <person name="Medigue C."/>
            <person name="Sadowsky M."/>
        </authorList>
    </citation>
    <scope>NUCLEOTIDE SEQUENCE [LARGE SCALE GENOMIC DNA]</scope>
    <source>
        <strain>BTAi1 / ATCC BAA-1182</strain>
    </source>
</reference>
<keyword id="KW-0028">Amino-acid biosynthesis</keyword>
<keyword id="KW-0963">Cytoplasm</keyword>
<keyword id="KW-0368">Histidine biosynthesis</keyword>
<keyword id="KW-0456">Lyase</keyword>
<keyword id="KW-1185">Reference proteome</keyword>
<comment type="function">
    <text evidence="1">IGPS catalyzes the conversion of PRFAR and glutamine to IGP, AICAR and glutamate. The HisF subunit catalyzes the cyclization activity that produces IGP and AICAR from PRFAR using the ammonia provided by the HisH subunit.</text>
</comment>
<comment type="catalytic activity">
    <reaction evidence="1">
        <text>5-[(5-phospho-1-deoxy-D-ribulos-1-ylimino)methylamino]-1-(5-phospho-beta-D-ribosyl)imidazole-4-carboxamide + L-glutamine = D-erythro-1-(imidazol-4-yl)glycerol 3-phosphate + 5-amino-1-(5-phospho-beta-D-ribosyl)imidazole-4-carboxamide + L-glutamate + H(+)</text>
        <dbReference type="Rhea" id="RHEA:24793"/>
        <dbReference type="ChEBI" id="CHEBI:15378"/>
        <dbReference type="ChEBI" id="CHEBI:29985"/>
        <dbReference type="ChEBI" id="CHEBI:58278"/>
        <dbReference type="ChEBI" id="CHEBI:58359"/>
        <dbReference type="ChEBI" id="CHEBI:58475"/>
        <dbReference type="ChEBI" id="CHEBI:58525"/>
        <dbReference type="EC" id="4.3.2.10"/>
    </reaction>
</comment>
<comment type="pathway">
    <text evidence="1">Amino-acid biosynthesis; L-histidine biosynthesis; L-histidine from 5-phospho-alpha-D-ribose 1-diphosphate: step 5/9.</text>
</comment>
<comment type="subunit">
    <text evidence="1">Heterodimer of HisH and HisF.</text>
</comment>
<comment type="subcellular location">
    <subcellularLocation>
        <location evidence="1">Cytoplasm</location>
    </subcellularLocation>
</comment>
<comment type="similarity">
    <text evidence="1">Belongs to the HisA/HisF family.</text>
</comment>
<organism>
    <name type="scientific">Bradyrhizobium sp. (strain BTAi1 / ATCC BAA-1182)</name>
    <dbReference type="NCBI Taxonomy" id="288000"/>
    <lineage>
        <taxon>Bacteria</taxon>
        <taxon>Pseudomonadati</taxon>
        <taxon>Pseudomonadota</taxon>
        <taxon>Alphaproteobacteria</taxon>
        <taxon>Hyphomicrobiales</taxon>
        <taxon>Nitrobacteraceae</taxon>
        <taxon>Bradyrhizobium</taxon>
    </lineage>
</organism>
<name>HIS6_BRASB</name>
<accession>A5E8E5</accession>
<feature type="chain" id="PRO_1000063031" description="Imidazole glycerol phosphate synthase subunit HisF">
    <location>
        <begin position="1"/>
        <end position="258"/>
    </location>
</feature>
<feature type="active site" evidence="1">
    <location>
        <position position="11"/>
    </location>
</feature>
<feature type="active site" evidence="1">
    <location>
        <position position="130"/>
    </location>
</feature>
<evidence type="ECO:0000255" key="1">
    <source>
        <dbReference type="HAMAP-Rule" id="MF_01013"/>
    </source>
</evidence>
<sequence>MFKVRVIPCLDVKDGRVVKGVNFVNLRDAGDPVEAAIAYDAAGADELCFLDITATHENRGIMLDVVRRTAEACFMPVTVGGGVRTIDDIKTLLRSGADKVSINSAAVARREFVKEAAEKFGEQCIVVAIDAKSVARPGGGSRWEIFTHGGRKSTGIDALEYAQEVVSLGAGEILLTSMDRDGTRQGFDIPLTRAVADSVPVPVIASGGVGNLDHLVDGIRQGRATAVLAASIFHFGEFTIRQAKEHMVRQGLPMRLDP</sequence>